<reference key="1">
    <citation type="submission" date="1998-11" db="EMBL/GenBank/DDBJ databases">
        <title>Cytochrome b of Streptomyces lividans.</title>
        <authorList>
            <person name="Parro V."/>
            <person name="Mellado R.P."/>
        </authorList>
    </citation>
    <scope>NUCLEOTIDE SEQUENCE [GENOMIC DNA]</scope>
    <source>
        <strain>TK21</strain>
    </source>
</reference>
<proteinExistence type="inferred from homology"/>
<evidence type="ECO:0000250" key="1">
    <source>
        <dbReference type="UniProtKB" id="P9WH23"/>
    </source>
</evidence>
<evidence type="ECO:0000255" key="2"/>
<evidence type="ECO:0000255" key="3">
    <source>
        <dbReference type="PROSITE-ProRule" id="PRU00628"/>
    </source>
</evidence>
<keyword id="KW-0001">2Fe-2S</keyword>
<keyword id="KW-1003">Cell membrane</keyword>
<keyword id="KW-1015">Disulfide bond</keyword>
<keyword id="KW-0249">Electron transport</keyword>
<keyword id="KW-0408">Iron</keyword>
<keyword id="KW-0411">Iron-sulfur</keyword>
<keyword id="KW-0472">Membrane</keyword>
<keyword id="KW-0479">Metal-binding</keyword>
<keyword id="KW-0560">Oxidoreductase</keyword>
<keyword id="KW-0679">Respiratory chain</keyword>
<keyword id="KW-0812">Transmembrane</keyword>
<keyword id="KW-0813">Transport</keyword>
<sequence>WRDLGPLPGTKLRHTLWSKGKLLVNMNTNEPLRPSDVAVGSLTFAMPEGLEEHDEDFQNEIAKAALMIIRLEPDSIKDKRELEWSHEGIVAYSKICTHVGCPISLYEQQTHHALCPCHQSTFDLADGARVIFGPAGHALPQLRIGVNDEGYLEALGDFEEPVGPAYWERG</sequence>
<comment type="function">
    <text evidence="1">Iron-sulfur subunit of the cytochrome bc1 complex, an essential component of the respiratory electron transport chain required for ATP synthesis. The bc1 complex catalyzes the oxidation of menaquinol and the reduction of cytochrome c in the respiratory chain. The bc1 complex operates through a Q-cycle mechanism that couples electron transfer to generation of the proton gradient that drives ATP synthesis.</text>
</comment>
<comment type="cofactor">
    <cofactor evidence="3">
        <name>[2Fe-2S] cluster</name>
        <dbReference type="ChEBI" id="CHEBI:190135"/>
    </cofactor>
    <text evidence="3">Binds 1 [2Fe-2S] cluster per subunit.</text>
</comment>
<comment type="subunit">
    <text evidence="1">The cytochrome bc1 complex is composed of a cytochrome b (QcrB), the Rieske iron-sulfur protein (QcrA) and a diheme cytochrome c (QcrC) subunit.</text>
</comment>
<comment type="subcellular location">
    <subcellularLocation>
        <location evidence="2">Cell membrane</location>
        <topology evidence="2">Multi-pass membrane protein</topology>
    </subcellularLocation>
</comment>
<protein>
    <recommendedName>
        <fullName>Cytochrome bc1 complex Rieske iron-sulfur subunit</fullName>
    </recommendedName>
    <alternativeName>
        <fullName>Cytochrome bc1 reductase complex subunit QcrA</fullName>
    </alternativeName>
    <alternativeName>
        <fullName>Rieske iron-sulfur protein</fullName>
    </alternativeName>
    <alternativeName>
        <fullName>Ubiquinol--cytochrome c reductase iron-sulfur subunit</fullName>
    </alternativeName>
</protein>
<organism>
    <name type="scientific">Streptomyces lividans</name>
    <dbReference type="NCBI Taxonomy" id="1916"/>
    <lineage>
        <taxon>Bacteria</taxon>
        <taxon>Bacillati</taxon>
        <taxon>Actinomycetota</taxon>
        <taxon>Actinomycetes</taxon>
        <taxon>Kitasatosporales</taxon>
        <taxon>Streptomycetaceae</taxon>
        <taxon>Streptomyces</taxon>
    </lineage>
</organism>
<accession>Q9ZFB7</accession>
<feature type="chain" id="PRO_0000127793" description="Cytochrome bc1 complex Rieske iron-sulfur subunit">
    <location>
        <begin position="1" status="less than"/>
        <end position="170"/>
    </location>
</feature>
<feature type="domain" description="Rieske" evidence="3">
    <location>
        <begin position="63"/>
        <end position="153"/>
    </location>
</feature>
<feature type="binding site" evidence="3">
    <location>
        <position position="96"/>
    </location>
    <ligand>
        <name>[2Fe-2S] cluster</name>
        <dbReference type="ChEBI" id="CHEBI:190135"/>
    </ligand>
</feature>
<feature type="binding site" evidence="3">
    <location>
        <position position="98"/>
    </location>
    <ligand>
        <name>[2Fe-2S] cluster</name>
        <dbReference type="ChEBI" id="CHEBI:190135"/>
    </ligand>
</feature>
<feature type="binding site" evidence="3">
    <location>
        <position position="115"/>
    </location>
    <ligand>
        <name>[2Fe-2S] cluster</name>
        <dbReference type="ChEBI" id="CHEBI:190135"/>
    </ligand>
</feature>
<feature type="binding site" evidence="3">
    <location>
        <position position="118"/>
    </location>
    <ligand>
        <name>[2Fe-2S] cluster</name>
        <dbReference type="ChEBI" id="CHEBI:190135"/>
    </ligand>
</feature>
<feature type="disulfide bond" evidence="3">
    <location>
        <begin position="101"/>
        <end position="117"/>
    </location>
</feature>
<feature type="non-terminal residue">
    <location>
        <position position="1"/>
    </location>
</feature>
<gene>
    <name type="primary">qcrA</name>
</gene>
<name>QCRA_STRLI</name>
<dbReference type="EMBL" id="AF107888">
    <property type="protein sequence ID" value="AAD04932.1"/>
    <property type="molecule type" value="Genomic_DNA"/>
</dbReference>
<dbReference type="SMR" id="Q9ZFB7"/>
<dbReference type="GO" id="GO:0005886">
    <property type="term" value="C:plasma membrane"/>
    <property type="evidence" value="ECO:0007669"/>
    <property type="project" value="UniProtKB-SubCell"/>
</dbReference>
<dbReference type="GO" id="GO:0051537">
    <property type="term" value="F:2 iron, 2 sulfur cluster binding"/>
    <property type="evidence" value="ECO:0007669"/>
    <property type="project" value="UniProtKB-KW"/>
</dbReference>
<dbReference type="GO" id="GO:0046872">
    <property type="term" value="F:metal ion binding"/>
    <property type="evidence" value="ECO:0007669"/>
    <property type="project" value="UniProtKB-KW"/>
</dbReference>
<dbReference type="GO" id="GO:0004497">
    <property type="term" value="F:monooxygenase activity"/>
    <property type="evidence" value="ECO:0007669"/>
    <property type="project" value="UniProtKB-ARBA"/>
</dbReference>
<dbReference type="GO" id="GO:0016705">
    <property type="term" value="F:oxidoreductase activity, acting on paired donors, with incorporation or reduction of molecular oxygen"/>
    <property type="evidence" value="ECO:0007669"/>
    <property type="project" value="UniProtKB-ARBA"/>
</dbReference>
<dbReference type="CDD" id="cd03467">
    <property type="entry name" value="Rieske"/>
    <property type="match status" value="1"/>
</dbReference>
<dbReference type="FunFam" id="2.102.10.10:FF:000010">
    <property type="entry name" value="Ubiquinol-cytochrome c reductase iron-sulfur subunit"/>
    <property type="match status" value="1"/>
</dbReference>
<dbReference type="Gene3D" id="2.102.10.10">
    <property type="entry name" value="Rieske [2Fe-2S] iron-sulphur domain"/>
    <property type="match status" value="1"/>
</dbReference>
<dbReference type="InterPro" id="IPR017941">
    <property type="entry name" value="Rieske_2Fe-2S"/>
</dbReference>
<dbReference type="InterPro" id="IPR036922">
    <property type="entry name" value="Rieske_2Fe-2S_sf"/>
</dbReference>
<dbReference type="InterPro" id="IPR014349">
    <property type="entry name" value="Rieske_Fe-S_prot"/>
</dbReference>
<dbReference type="InterPro" id="IPR005805">
    <property type="entry name" value="Rieske_Fe-S_prot_C"/>
</dbReference>
<dbReference type="PANTHER" id="PTHR10134">
    <property type="entry name" value="CYTOCHROME B-C1 COMPLEX SUBUNIT RIESKE, MITOCHONDRIAL"/>
    <property type="match status" value="1"/>
</dbReference>
<dbReference type="Pfam" id="PF00355">
    <property type="entry name" value="Rieske"/>
    <property type="match status" value="1"/>
</dbReference>
<dbReference type="PRINTS" id="PR00162">
    <property type="entry name" value="RIESKE"/>
</dbReference>
<dbReference type="SUPFAM" id="SSF50022">
    <property type="entry name" value="ISP domain"/>
    <property type="match status" value="1"/>
</dbReference>
<dbReference type="PROSITE" id="PS51296">
    <property type="entry name" value="RIESKE"/>
    <property type="match status" value="1"/>
</dbReference>